<comment type="function">
    <text evidence="1">Involved in the import of serine and threonine into the cell, with the concomitant import of sodium (symport system).</text>
</comment>
<comment type="catalytic activity">
    <reaction evidence="1">
        <text>L-serine(in) + Na(+)(in) = L-serine(out) + Na(+)(out)</text>
        <dbReference type="Rhea" id="RHEA:29575"/>
        <dbReference type="ChEBI" id="CHEBI:29101"/>
        <dbReference type="ChEBI" id="CHEBI:33384"/>
    </reaction>
    <physiologicalReaction direction="right-to-left" evidence="1">
        <dbReference type="Rhea" id="RHEA:29577"/>
    </physiologicalReaction>
</comment>
<comment type="catalytic activity">
    <reaction evidence="1">
        <text>L-threonine(in) + Na(+)(in) = L-threonine(out) + Na(+)(out)</text>
        <dbReference type="Rhea" id="RHEA:69999"/>
        <dbReference type="ChEBI" id="CHEBI:29101"/>
        <dbReference type="ChEBI" id="CHEBI:57926"/>
    </reaction>
    <physiologicalReaction direction="right-to-left" evidence="1">
        <dbReference type="Rhea" id="RHEA:70001"/>
    </physiologicalReaction>
</comment>
<comment type="subcellular location">
    <subcellularLocation>
        <location evidence="1">Cell inner membrane</location>
        <topology evidence="1">Multi-pass membrane protein</topology>
    </subcellularLocation>
</comment>
<comment type="similarity">
    <text evidence="1">Belongs to the dicarboxylate/amino acid:cation symporter (DAACS) (TC 2.A.23) family.</text>
</comment>
<gene>
    <name evidence="1" type="primary">sstT</name>
    <name type="ordered locus">SeAg_B3413</name>
</gene>
<evidence type="ECO:0000255" key="1">
    <source>
        <dbReference type="HAMAP-Rule" id="MF_01582"/>
    </source>
</evidence>
<feature type="chain" id="PRO_1000197558" description="Serine/threonine transporter SstT">
    <location>
        <begin position="1"/>
        <end position="414"/>
    </location>
</feature>
<feature type="transmembrane region" description="Helical" evidence="1">
    <location>
        <begin position="16"/>
        <end position="36"/>
    </location>
</feature>
<feature type="transmembrane region" description="Helical" evidence="1">
    <location>
        <begin position="46"/>
        <end position="66"/>
    </location>
</feature>
<feature type="transmembrane region" description="Helical" evidence="1">
    <location>
        <begin position="84"/>
        <end position="104"/>
    </location>
</feature>
<feature type="transmembrane region" description="Helical" evidence="1">
    <location>
        <begin position="143"/>
        <end position="163"/>
    </location>
</feature>
<feature type="transmembrane region" description="Helical" evidence="1">
    <location>
        <begin position="180"/>
        <end position="200"/>
    </location>
</feature>
<feature type="transmembrane region" description="Helical" evidence="1">
    <location>
        <begin position="219"/>
        <end position="239"/>
    </location>
</feature>
<feature type="transmembrane region" description="Helical" evidence="1">
    <location>
        <begin position="300"/>
        <end position="320"/>
    </location>
</feature>
<feature type="transmembrane region" description="Helical" evidence="1">
    <location>
        <begin position="332"/>
        <end position="352"/>
    </location>
</feature>
<protein>
    <recommendedName>
        <fullName evidence="1">Serine/threonine transporter SstT</fullName>
    </recommendedName>
    <alternativeName>
        <fullName evidence="1">Na(+)/serine-threonine symporter</fullName>
    </alternativeName>
</protein>
<organism>
    <name type="scientific">Salmonella agona (strain SL483)</name>
    <dbReference type="NCBI Taxonomy" id="454166"/>
    <lineage>
        <taxon>Bacteria</taxon>
        <taxon>Pseudomonadati</taxon>
        <taxon>Pseudomonadota</taxon>
        <taxon>Gammaproteobacteria</taxon>
        <taxon>Enterobacterales</taxon>
        <taxon>Enterobacteriaceae</taxon>
        <taxon>Salmonella</taxon>
    </lineage>
</organism>
<keyword id="KW-0029">Amino-acid transport</keyword>
<keyword id="KW-0997">Cell inner membrane</keyword>
<keyword id="KW-1003">Cell membrane</keyword>
<keyword id="KW-0472">Membrane</keyword>
<keyword id="KW-0769">Symport</keyword>
<keyword id="KW-0812">Transmembrane</keyword>
<keyword id="KW-1133">Transmembrane helix</keyword>
<keyword id="KW-0813">Transport</keyword>
<accession>B5F6N2</accession>
<proteinExistence type="inferred from homology"/>
<dbReference type="EMBL" id="CP001138">
    <property type="protein sequence ID" value="ACH50939.1"/>
    <property type="molecule type" value="Genomic_DNA"/>
</dbReference>
<dbReference type="RefSeq" id="WP_000235360.1">
    <property type="nucleotide sequence ID" value="NC_011149.1"/>
</dbReference>
<dbReference type="SMR" id="B5F6N2"/>
<dbReference type="KEGG" id="sea:SeAg_B3413"/>
<dbReference type="HOGENOM" id="CLU_044581_0_0_6"/>
<dbReference type="Proteomes" id="UP000008819">
    <property type="component" value="Chromosome"/>
</dbReference>
<dbReference type="GO" id="GO:0005886">
    <property type="term" value="C:plasma membrane"/>
    <property type="evidence" value="ECO:0007669"/>
    <property type="project" value="UniProtKB-SubCell"/>
</dbReference>
<dbReference type="GO" id="GO:0005295">
    <property type="term" value="F:neutral L-amino acid:sodium symporter activity"/>
    <property type="evidence" value="ECO:0007669"/>
    <property type="project" value="TreeGrafter"/>
</dbReference>
<dbReference type="GO" id="GO:0032329">
    <property type="term" value="P:serine transport"/>
    <property type="evidence" value="ECO:0007669"/>
    <property type="project" value="InterPro"/>
</dbReference>
<dbReference type="GO" id="GO:0015826">
    <property type="term" value="P:threonine transport"/>
    <property type="evidence" value="ECO:0007669"/>
    <property type="project" value="InterPro"/>
</dbReference>
<dbReference type="FunFam" id="1.10.3860.10:FF:000003">
    <property type="entry name" value="Serine/threonine transporter sstT"/>
    <property type="match status" value="1"/>
</dbReference>
<dbReference type="Gene3D" id="1.10.3860.10">
    <property type="entry name" value="Sodium:dicarboxylate symporter"/>
    <property type="match status" value="1"/>
</dbReference>
<dbReference type="HAMAP" id="MF_01582">
    <property type="entry name" value="Ser_Thr_transp_SstT"/>
    <property type="match status" value="1"/>
</dbReference>
<dbReference type="InterPro" id="IPR001991">
    <property type="entry name" value="Na-dicarboxylate_symporter"/>
</dbReference>
<dbReference type="InterPro" id="IPR036458">
    <property type="entry name" value="Na:dicarbo_symporter_sf"/>
</dbReference>
<dbReference type="InterPro" id="IPR023025">
    <property type="entry name" value="Ser_Thr_transp_SstT"/>
</dbReference>
<dbReference type="NCBIfam" id="NF010151">
    <property type="entry name" value="PRK13628.1"/>
    <property type="match status" value="1"/>
</dbReference>
<dbReference type="PANTHER" id="PTHR42865">
    <property type="entry name" value="PROTON/GLUTAMATE-ASPARTATE SYMPORTER"/>
    <property type="match status" value="1"/>
</dbReference>
<dbReference type="PANTHER" id="PTHR42865:SF8">
    <property type="entry name" value="SERINE_THREONINE TRANSPORTER SSTT"/>
    <property type="match status" value="1"/>
</dbReference>
<dbReference type="Pfam" id="PF00375">
    <property type="entry name" value="SDF"/>
    <property type="match status" value="1"/>
</dbReference>
<dbReference type="PRINTS" id="PR00173">
    <property type="entry name" value="EDTRNSPORT"/>
</dbReference>
<dbReference type="SUPFAM" id="SSF118215">
    <property type="entry name" value="Proton glutamate symport protein"/>
    <property type="match status" value="1"/>
</dbReference>
<dbReference type="PROSITE" id="PS00713">
    <property type="entry name" value="NA_DICARBOXYL_SYMP_1"/>
    <property type="match status" value="1"/>
</dbReference>
<name>SSTT_SALA4</name>
<reference key="1">
    <citation type="journal article" date="2011" name="J. Bacteriol.">
        <title>Comparative genomics of 28 Salmonella enterica isolates: evidence for CRISPR-mediated adaptive sublineage evolution.</title>
        <authorList>
            <person name="Fricke W.F."/>
            <person name="Mammel M.K."/>
            <person name="McDermott P.F."/>
            <person name="Tartera C."/>
            <person name="White D.G."/>
            <person name="Leclerc J.E."/>
            <person name="Ravel J."/>
            <person name="Cebula T.A."/>
        </authorList>
    </citation>
    <scope>NUCLEOTIDE SEQUENCE [LARGE SCALE GENOMIC DNA]</scope>
    <source>
        <strain>SL483</strain>
    </source>
</reference>
<sequence>MATQRASGLLQRLAQGSLVKQILVGLVLGILLAWISKPAAEAVGLLGTLFVGALKAVAPVLVLMLVMASIANHQHGQKTNIRPILFLYLLGTFSAALAAVVFSFAFPSTLHLSSSAQDIVPPSGIVEVLRGLLMSMVSNPIDALLNANYIGILVWAVGLGFALRHGNETTKNLVNDMSNAVTFMVKLVIRFAPIGIFGLVSSTLATTGFSTLWGYAHLLVVLIGCMLLVALVVNPLLVFWKIRRNPYPLVFACLRESGVYAFFTRSSAANIPVNMALCEKLNLDRDTYSVSIPLGATINMAGAAITITVLTLAAVHTLGVPVDLPTALLLSVVASLCACGASGVAGGSLLLIPLACNMFGIPNDIAMQVVAVGFIIGVLQDSCETALNSSTDVLFTAAACQAEDERLANNALRS</sequence>